<protein>
    <recommendedName>
        <fullName evidence="10">Transferrin 2</fullName>
    </recommendedName>
    <alternativeName>
        <fullName evidence="7">Melanotransferrin</fullName>
    </alternativeName>
</protein>
<evidence type="ECO:0000250" key="1">
    <source>
        <dbReference type="UniProtKB" id="P02788"/>
    </source>
</evidence>
<evidence type="ECO:0000255" key="2"/>
<evidence type="ECO:0000255" key="3">
    <source>
        <dbReference type="PROSITE-ProRule" id="PRU00498"/>
    </source>
</evidence>
<evidence type="ECO:0000255" key="4">
    <source>
        <dbReference type="PROSITE-ProRule" id="PRU00741"/>
    </source>
</evidence>
<evidence type="ECO:0000256" key="5">
    <source>
        <dbReference type="SAM" id="MobiDB-lite"/>
    </source>
</evidence>
<evidence type="ECO:0000269" key="6">
    <source>
    </source>
</evidence>
<evidence type="ECO:0000303" key="7">
    <source>
    </source>
</evidence>
<evidence type="ECO:0000305" key="8"/>
<evidence type="ECO:0000312" key="9">
    <source>
        <dbReference type="EMBL" id="AAO42654.1"/>
    </source>
</evidence>
<evidence type="ECO:0000312" key="10">
    <source>
        <dbReference type="FlyBase" id="FBgn0036299"/>
    </source>
</evidence>
<evidence type="ECO:0000312" key="11">
    <source>
        <dbReference type="Proteomes" id="UP000000803"/>
    </source>
</evidence>
<organism evidence="11">
    <name type="scientific">Drosophila melanogaster</name>
    <name type="common">Fruit fly</name>
    <dbReference type="NCBI Taxonomy" id="7227"/>
    <lineage>
        <taxon>Eukaryota</taxon>
        <taxon>Metazoa</taxon>
        <taxon>Ecdysozoa</taxon>
        <taxon>Arthropoda</taxon>
        <taxon>Hexapoda</taxon>
        <taxon>Insecta</taxon>
        <taxon>Pterygota</taxon>
        <taxon>Neoptera</taxon>
        <taxon>Endopterygota</taxon>
        <taxon>Diptera</taxon>
        <taxon>Brachycera</taxon>
        <taxon>Muscomorpha</taxon>
        <taxon>Ephydroidea</taxon>
        <taxon>Drosophilidae</taxon>
        <taxon>Drosophila</taxon>
        <taxon>Sophophora</taxon>
    </lineage>
</organism>
<keyword id="KW-0965">Cell junction</keyword>
<keyword id="KW-1003">Cell membrane</keyword>
<keyword id="KW-1015">Disulfide bond</keyword>
<keyword id="KW-0325">Glycoprotein</keyword>
<keyword id="KW-0336">GPI-anchor</keyword>
<keyword id="KW-0406">Ion transport</keyword>
<keyword id="KW-0408">Iron</keyword>
<keyword id="KW-0410">Iron transport</keyword>
<keyword id="KW-0449">Lipoprotein</keyword>
<keyword id="KW-0472">Membrane</keyword>
<keyword id="KW-0479">Metal-binding</keyword>
<keyword id="KW-1185">Reference proteome</keyword>
<keyword id="KW-0677">Repeat</keyword>
<keyword id="KW-0732">Signal</keyword>
<keyword id="KW-0813">Transport</keyword>
<accession>Q9VTZ5</accession>
<gene>
    <name evidence="10" type="primary">Tsf2</name>
    <name evidence="7" type="synonym">MTf</name>
    <name evidence="10" type="ORF">CG10620</name>
</gene>
<sequence>MASSLVFVALVGALCFTLANAQHHYDEHKTTRMVWCTKSQAEQYKCQNLTVAIERDRALFDEVFLNLTCFMAYSADECIHHIDREKAHITTLDAGDVFTAGRYNSLIPIMQEKLEGGFADYQSVAVIKKGSLPDLNNLRDMRNKRVCFPWVGSLAGWIVPIHTLQREGGMEVVDCNNQVKTAASYFNNSCAVYSLSDKHNPIGDNSDKLCTLCTGKIPGGRCSSADPYFGYEGAFKCLLEKGDVAFLRHSTVNEMLQTTEFKNIAPDTFELLCRDGRRASINDYRQCNWGQVPADAIVTSSARSFSDRKQYQQFLKRIAELYSDGTRDDQSRQGGQSFNSRNNINDQNAYGQFDNNDPYRTQNQYDQYRSERLDSSFAEERNQQDGTNTSILYEKFRIFESKRYGKPNLLFQDSSRALTVIPEDDQSFTKYLGPAINFIYGIRECPVPAMTLCVTSENELDKCIKMRTALKAHLLKPELICKKMHSHINCMQFIEAGKADISVFDAGDVYTGGLNYDLVPFMSEVYNLGEPEYYVVAVAKEDDPDTELTYLKGKNTCHTGINTAAGWTYPMALFISNGWIRPYGCDSVRAAAEYFTKSCVPGAISNEYNTGVPYDSMCDLCHGTSYRYCRRDASEEYYGHTGAFRCLVEGGGHVAFMKHTTVMESTGGKRKEWWARNALNDDFELLCTDGTRAEIQDYKRCNLGKVKANAVVTRGGVNYNETQMNAYINLLTYAQQLYGRKEVDAFSFSMFSSPIGHYDLIFQDATRQLQVIPPNKRRYDAYLGSDFMRARRITDCYAGASQLALSVGLLLVGSLVAML</sequence>
<feature type="signal peptide" evidence="2">
    <location>
        <begin position="1"/>
        <end position="21"/>
    </location>
</feature>
<feature type="chain" id="PRO_5015100573" description="Transferrin 2" evidence="2">
    <location>
        <begin position="22"/>
        <end position="819"/>
    </location>
</feature>
<feature type="propeptide" id="PRO_0000458119" description="Removed in mature form" evidence="2">
    <location>
        <begin position="797"/>
        <end position="819"/>
    </location>
</feature>
<feature type="domain" description="Transferrin-like 1" evidence="4">
    <location>
        <begin position="33"/>
        <end position="373"/>
    </location>
</feature>
<feature type="domain" description="Transferrin-like 2" evidence="4">
    <location>
        <begin position="450"/>
        <end position="796"/>
    </location>
</feature>
<feature type="region of interest" description="Disordered" evidence="5">
    <location>
        <begin position="325"/>
        <end position="361"/>
    </location>
</feature>
<feature type="compositionally biased region" description="Polar residues" evidence="5">
    <location>
        <begin position="332"/>
        <end position="361"/>
    </location>
</feature>
<feature type="binding site" evidence="1">
    <location>
        <position position="93"/>
    </location>
    <ligand>
        <name>Fe(3+)</name>
        <dbReference type="ChEBI" id="CHEBI:29034"/>
        <label>1</label>
    </ligand>
</feature>
<feature type="binding site" evidence="1">
    <location>
        <position position="121"/>
    </location>
    <ligand>
        <name>Fe(3+)</name>
        <dbReference type="ChEBI" id="CHEBI:29034"/>
        <label>1</label>
    </ligand>
</feature>
<feature type="binding site" evidence="1">
    <location>
        <position position="155"/>
    </location>
    <ligand>
        <name>hydrogencarbonate</name>
        <dbReference type="ChEBI" id="CHEBI:17544"/>
        <label>1</label>
    </ligand>
</feature>
<feature type="binding site" evidence="1">
    <location>
        <position position="156"/>
    </location>
    <ligand>
        <name>hydrogencarbonate</name>
        <dbReference type="ChEBI" id="CHEBI:17544"/>
        <label>1</label>
    </ligand>
</feature>
<feature type="binding site" evidence="6">
    <location>
        <position position="231"/>
    </location>
    <ligand>
        <name>Fe(3+)</name>
        <dbReference type="ChEBI" id="CHEBI:29034"/>
        <label>1</label>
    </ligand>
</feature>
<feature type="binding site" evidence="1">
    <location>
        <position position="505"/>
    </location>
    <ligand>
        <name>Fe(3+)</name>
        <dbReference type="ChEBI" id="CHEBI:29034"/>
        <label>2</label>
    </ligand>
</feature>
<feature type="binding site" evidence="6">
    <location>
        <position position="533"/>
    </location>
    <ligand>
        <name>Fe(3+)</name>
        <dbReference type="ChEBI" id="CHEBI:29034"/>
        <label>2</label>
    </ligand>
</feature>
<feature type="binding site" evidence="1">
    <location>
        <position position="559"/>
    </location>
    <ligand>
        <name>hydrogencarbonate</name>
        <dbReference type="ChEBI" id="CHEBI:17544"/>
        <label>2</label>
    </ligand>
</feature>
<feature type="binding site" evidence="1">
    <location>
        <position position="565"/>
    </location>
    <ligand>
        <name>hydrogencarbonate</name>
        <dbReference type="ChEBI" id="CHEBI:17544"/>
        <label>2</label>
    </ligand>
</feature>
<feature type="binding site" evidence="1">
    <location>
        <position position="566"/>
    </location>
    <ligand>
        <name>hydrogencarbonate</name>
        <dbReference type="ChEBI" id="CHEBI:17544"/>
        <label>2</label>
    </ligand>
</feature>
<feature type="lipid moiety-binding region" description="GPI-anchor amidated cysteine" evidence="2">
    <location>
        <position position="796"/>
    </location>
</feature>
<feature type="glycosylation site" description="N-linked (GlcNAc...) asparagine" evidence="3">
    <location>
        <position position="48"/>
    </location>
</feature>
<feature type="glycosylation site" description="N-linked (GlcNAc...) asparagine" evidence="3">
    <location>
        <position position="66"/>
    </location>
</feature>
<feature type="glycosylation site" description="N-linked (GlcNAc...) asparagine" evidence="3">
    <location>
        <position position="187"/>
    </location>
</feature>
<feature type="glycosylation site" description="N-linked (GlcNAc...) asparagine" evidence="3">
    <location>
        <position position="388"/>
    </location>
</feature>
<feature type="glycosylation site" description="N-linked (GlcNAc...) asparagine" evidence="3">
    <location>
        <position position="720"/>
    </location>
</feature>
<feature type="disulfide bond" evidence="4">
    <location>
        <begin position="36"/>
        <end position="78"/>
    </location>
</feature>
<feature type="disulfide bond" evidence="4">
    <location>
        <begin position="46"/>
        <end position="69"/>
    </location>
</feature>
<feature type="disulfide bond" evidence="4">
    <location>
        <begin position="147"/>
        <end position="237"/>
    </location>
</feature>
<feature type="disulfide bond" evidence="4">
    <location>
        <begin position="190"/>
        <end position="213"/>
    </location>
</feature>
<feature type="disulfide bond" evidence="4">
    <location>
        <begin position="273"/>
        <end position="287"/>
    </location>
</feature>
<feature type="disulfide bond" evidence="4">
    <location>
        <begin position="453"/>
        <end position="490"/>
    </location>
</feature>
<feature type="disulfide bond" evidence="4">
    <location>
        <begin position="463"/>
        <end position="481"/>
    </location>
</feature>
<feature type="disulfide bond" evidence="4">
    <location>
        <begin position="557"/>
        <end position="646"/>
    </location>
</feature>
<feature type="disulfide bond" evidence="4">
    <location>
        <begin position="599"/>
        <end position="621"/>
    </location>
</feature>
<feature type="disulfide bond" evidence="4">
    <location>
        <begin position="618"/>
        <end position="629"/>
    </location>
</feature>
<feature type="disulfide bond" evidence="4">
    <location>
        <begin position="687"/>
        <end position="701"/>
    </location>
</feature>
<feature type="mutagenesis site" description="Reduces iron binding; rescues Nrx-IV/Nrx mislocalization and tube overelongation in trachea of knockout embryos; when associated with 798-A--L-819 del." evidence="6">
    <original>Y</original>
    <variation>F</variation>
    <location>
        <position position="231"/>
    </location>
</feature>
<feature type="mutagenesis site" description="Abolishes iron binding and endocytosis by epithelial cells; does not rescue Nrx-IV/Nrx mislocalization and tube overelongation in trachea of knockout embryos; when associated with 798-A--L-819 del." evidence="6">
    <original>Y</original>
    <variation>F</variation>
    <location>
        <position position="533"/>
    </location>
</feature>
<feature type="mutagenesis site" description="Loss of cell membrane localization. Rescues Nrx-IV/Nrx mislocalization and tube overelongation in trachea of knockout embryos. Reduces iron binding; rescues Nrx-IV/Nrx mislocalization and tube overelongation in trachea of knockout embryos; when associated with F-231. Abolishes iron binding and endocytosis by epithelial cells; does not rescue Nrx-IV/Nrx mislocalization and tube overelongation in trachea of knockout embryos; when associated with F-533." evidence="6">
    <location>
        <begin position="798"/>
        <end position="819"/>
    </location>
</feature>
<reference evidence="11" key="1">
    <citation type="journal article" date="2000" name="Science">
        <title>The genome sequence of Drosophila melanogaster.</title>
        <authorList>
            <person name="Adams M.D."/>
            <person name="Celniker S.E."/>
            <person name="Holt R.A."/>
            <person name="Evans C.A."/>
            <person name="Gocayne J.D."/>
            <person name="Amanatides P.G."/>
            <person name="Scherer S.E."/>
            <person name="Li P.W."/>
            <person name="Hoskins R.A."/>
            <person name="Galle R.F."/>
            <person name="George R.A."/>
            <person name="Lewis S.E."/>
            <person name="Richards S."/>
            <person name="Ashburner M."/>
            <person name="Henderson S.N."/>
            <person name="Sutton G.G."/>
            <person name="Wortman J.R."/>
            <person name="Yandell M.D."/>
            <person name="Zhang Q."/>
            <person name="Chen L.X."/>
            <person name="Brandon R.C."/>
            <person name="Rogers Y.-H.C."/>
            <person name="Blazej R.G."/>
            <person name="Champe M."/>
            <person name="Pfeiffer B.D."/>
            <person name="Wan K.H."/>
            <person name="Doyle C."/>
            <person name="Baxter E.G."/>
            <person name="Helt G."/>
            <person name="Nelson C.R."/>
            <person name="Miklos G.L.G."/>
            <person name="Abril J.F."/>
            <person name="Agbayani A."/>
            <person name="An H.-J."/>
            <person name="Andrews-Pfannkoch C."/>
            <person name="Baldwin D."/>
            <person name="Ballew R.M."/>
            <person name="Basu A."/>
            <person name="Baxendale J."/>
            <person name="Bayraktaroglu L."/>
            <person name="Beasley E.M."/>
            <person name="Beeson K.Y."/>
            <person name="Benos P.V."/>
            <person name="Berman B.P."/>
            <person name="Bhandari D."/>
            <person name="Bolshakov S."/>
            <person name="Borkova D."/>
            <person name="Botchan M.R."/>
            <person name="Bouck J."/>
            <person name="Brokstein P."/>
            <person name="Brottier P."/>
            <person name="Burtis K.C."/>
            <person name="Busam D.A."/>
            <person name="Butler H."/>
            <person name="Cadieu E."/>
            <person name="Center A."/>
            <person name="Chandra I."/>
            <person name="Cherry J.M."/>
            <person name="Cawley S."/>
            <person name="Dahlke C."/>
            <person name="Davenport L.B."/>
            <person name="Davies P."/>
            <person name="de Pablos B."/>
            <person name="Delcher A."/>
            <person name="Deng Z."/>
            <person name="Mays A.D."/>
            <person name="Dew I."/>
            <person name="Dietz S.M."/>
            <person name="Dodson K."/>
            <person name="Doup L.E."/>
            <person name="Downes M."/>
            <person name="Dugan-Rocha S."/>
            <person name="Dunkov B.C."/>
            <person name="Dunn P."/>
            <person name="Durbin K.J."/>
            <person name="Evangelista C.C."/>
            <person name="Ferraz C."/>
            <person name="Ferriera S."/>
            <person name="Fleischmann W."/>
            <person name="Fosler C."/>
            <person name="Gabrielian A.E."/>
            <person name="Garg N.S."/>
            <person name="Gelbart W.M."/>
            <person name="Glasser K."/>
            <person name="Glodek A."/>
            <person name="Gong F."/>
            <person name="Gorrell J.H."/>
            <person name="Gu Z."/>
            <person name="Guan P."/>
            <person name="Harris M."/>
            <person name="Harris N.L."/>
            <person name="Harvey D.A."/>
            <person name="Heiman T.J."/>
            <person name="Hernandez J.R."/>
            <person name="Houck J."/>
            <person name="Hostin D."/>
            <person name="Houston K.A."/>
            <person name="Howland T.J."/>
            <person name="Wei M.-H."/>
            <person name="Ibegwam C."/>
            <person name="Jalali M."/>
            <person name="Kalush F."/>
            <person name="Karpen G.H."/>
            <person name="Ke Z."/>
            <person name="Kennison J.A."/>
            <person name="Ketchum K.A."/>
            <person name="Kimmel B.E."/>
            <person name="Kodira C.D."/>
            <person name="Kraft C.L."/>
            <person name="Kravitz S."/>
            <person name="Kulp D."/>
            <person name="Lai Z."/>
            <person name="Lasko P."/>
            <person name="Lei Y."/>
            <person name="Levitsky A.A."/>
            <person name="Li J.H."/>
            <person name="Li Z."/>
            <person name="Liang Y."/>
            <person name="Lin X."/>
            <person name="Liu X."/>
            <person name="Mattei B."/>
            <person name="McIntosh T.C."/>
            <person name="McLeod M.P."/>
            <person name="McPherson D."/>
            <person name="Merkulov G."/>
            <person name="Milshina N.V."/>
            <person name="Mobarry C."/>
            <person name="Morris J."/>
            <person name="Moshrefi A."/>
            <person name="Mount S.M."/>
            <person name="Moy M."/>
            <person name="Murphy B."/>
            <person name="Murphy L."/>
            <person name="Muzny D.M."/>
            <person name="Nelson D.L."/>
            <person name="Nelson D.R."/>
            <person name="Nelson K.A."/>
            <person name="Nixon K."/>
            <person name="Nusskern D.R."/>
            <person name="Pacleb J.M."/>
            <person name="Palazzolo M."/>
            <person name="Pittman G.S."/>
            <person name="Pan S."/>
            <person name="Pollard J."/>
            <person name="Puri V."/>
            <person name="Reese M.G."/>
            <person name="Reinert K."/>
            <person name="Remington K."/>
            <person name="Saunders R.D.C."/>
            <person name="Scheeler F."/>
            <person name="Shen H."/>
            <person name="Shue B.C."/>
            <person name="Siden-Kiamos I."/>
            <person name="Simpson M."/>
            <person name="Skupski M.P."/>
            <person name="Smith T.J."/>
            <person name="Spier E."/>
            <person name="Spradling A.C."/>
            <person name="Stapleton M."/>
            <person name="Strong R."/>
            <person name="Sun E."/>
            <person name="Svirskas R."/>
            <person name="Tector C."/>
            <person name="Turner R."/>
            <person name="Venter E."/>
            <person name="Wang A.H."/>
            <person name="Wang X."/>
            <person name="Wang Z.-Y."/>
            <person name="Wassarman D.A."/>
            <person name="Weinstock G.M."/>
            <person name="Weissenbach J."/>
            <person name="Williams S.M."/>
            <person name="Woodage T."/>
            <person name="Worley K.C."/>
            <person name="Wu D."/>
            <person name="Yang S."/>
            <person name="Yao Q.A."/>
            <person name="Ye J."/>
            <person name="Yeh R.-F."/>
            <person name="Zaveri J.S."/>
            <person name="Zhan M."/>
            <person name="Zhang G."/>
            <person name="Zhao Q."/>
            <person name="Zheng L."/>
            <person name="Zheng X.H."/>
            <person name="Zhong F.N."/>
            <person name="Zhong W."/>
            <person name="Zhou X."/>
            <person name="Zhu S.C."/>
            <person name="Zhu X."/>
            <person name="Smith H.O."/>
            <person name="Gibbs R.A."/>
            <person name="Myers E.W."/>
            <person name="Rubin G.M."/>
            <person name="Venter J.C."/>
        </authorList>
    </citation>
    <scope>NUCLEOTIDE SEQUENCE [LARGE SCALE GENOMIC DNA]</scope>
    <source>
        <strain evidence="11">Berkeley</strain>
    </source>
</reference>
<reference evidence="11" key="2">
    <citation type="journal article" date="2002" name="Genome Biol.">
        <title>Annotation of the Drosophila melanogaster euchromatic genome: a systematic review.</title>
        <authorList>
            <person name="Misra S."/>
            <person name="Crosby M.A."/>
            <person name="Mungall C.J."/>
            <person name="Matthews B.B."/>
            <person name="Campbell K.S."/>
            <person name="Hradecky P."/>
            <person name="Huang Y."/>
            <person name="Kaminker J.S."/>
            <person name="Millburn G.H."/>
            <person name="Prochnik S.E."/>
            <person name="Smith C.D."/>
            <person name="Tupy J.L."/>
            <person name="Whitfield E.J."/>
            <person name="Bayraktaroglu L."/>
            <person name="Berman B.P."/>
            <person name="Bettencourt B.R."/>
            <person name="Celniker S.E."/>
            <person name="de Grey A.D.N.J."/>
            <person name="Drysdale R.A."/>
            <person name="Harris N.L."/>
            <person name="Richter J."/>
            <person name="Russo S."/>
            <person name="Schroeder A.J."/>
            <person name="Shu S.Q."/>
            <person name="Stapleton M."/>
            <person name="Yamada C."/>
            <person name="Ashburner M."/>
            <person name="Gelbart W.M."/>
            <person name="Rubin G.M."/>
            <person name="Lewis S.E."/>
        </authorList>
    </citation>
    <scope>GENOME REANNOTATION</scope>
    <source>
        <strain evidence="11">Berkeley</strain>
    </source>
</reference>
<reference evidence="9" key="3">
    <citation type="submission" date="2003-02" db="EMBL/GenBank/DDBJ databases">
        <authorList>
            <person name="Stapleton M."/>
            <person name="Brokstein P."/>
            <person name="Hong L."/>
            <person name="Agbayani A."/>
            <person name="Carlson J."/>
            <person name="Champe M."/>
            <person name="Chavez C."/>
            <person name="Dorsett V."/>
            <person name="Dresnek D."/>
            <person name="Farfan D."/>
            <person name="Frise E."/>
            <person name="George R."/>
            <person name="Gonzalez M."/>
            <person name="Guarin H."/>
            <person name="Kronmiller B."/>
            <person name="Li P."/>
            <person name="Liao G."/>
            <person name="Miranda A."/>
            <person name="Mungall C.J."/>
            <person name="Nunoo J."/>
            <person name="Pacleb J."/>
            <person name="Paragas V."/>
            <person name="Park S."/>
            <person name="Patel S."/>
            <person name="Phouanenavong S."/>
            <person name="Wan K."/>
            <person name="Yu C."/>
            <person name="Lewis S.E."/>
            <person name="Rubin G.M."/>
            <person name="Celniker S."/>
        </authorList>
    </citation>
    <scope>NUCLEOTIDE SEQUENCE [LARGE SCALE MRNA]</scope>
    <source>
        <strain evidence="9">Berkeley</strain>
    </source>
</reference>
<reference evidence="8" key="4">
    <citation type="journal article" date="2010" name="Nat. Cell Biol.">
        <title>Epithelial septate junction assembly relies on melanotransferrin iron binding and endocytosis in Drosophila.</title>
        <authorList>
            <person name="Tiklova K."/>
            <person name="Senti K.A."/>
            <person name="Wang S."/>
            <person name="Graeslund A."/>
            <person name="Samakovlis C."/>
        </authorList>
    </citation>
    <scope>FUNCTION</scope>
    <scope>IDENTIFICATION IN A COMPLEX WITH NRX-IV; CONT AND NRG</scope>
    <scope>SUBCELLULAR LOCATION</scope>
    <scope>DEVELOPMENTAL STAGE</scope>
    <scope>DISRUPTION PHENOTYPE</scope>
    <scope>MUTAGENESIS OF TYR-231; TYR-533 AND 798-ALA--LEU-820</scope>
</reference>
<comment type="function">
    <text evidence="6">Iron-binding protein and component of septate junctions that form the paracellular permeability barrier in epithelial tissues (PubMed:20935638). In an iron-dependent manner, required for septate junction assembly during epithelial maturation in embryos and mature septa junctions stability (PubMed:20935638).</text>
</comment>
<comment type="subunit">
    <text evidence="6">Forms a complex composed of septa junction proteins Nrx-IV/Nrx, Tsf2/MTf, Cont and Nrg during late embryogenesis.</text>
</comment>
<comment type="subcellular location">
    <subcellularLocation>
        <location evidence="6">Apicolateral cell membrane</location>
        <topology evidence="6">Lipid-anchor</topology>
        <topology evidence="6">GPI-anchor</topology>
    </subcellularLocation>
    <subcellularLocation>
        <location evidence="6">Cell junction</location>
        <location evidence="6">Septate junction</location>
    </subcellularLocation>
    <text evidence="6">At embryonic stage 13, before septate junction formation, localizes evenly along the lateral and basal epithelial cell membranes (PubMed:20935638). Between stages 13 and 16, during septate junction maturation, enters and traffics through early and recycling endosomes; binding to Fe(3+) is required for Tsf2 endocytosis (PubMed:20935638). At embryonic stage 16, when the septate junctions are matured, specifically localizes to the apicolateral epithelial cell membranes (PubMed:20935638).</text>
</comment>
<comment type="developmental stage">
    <text evidence="6">In embryos, expressed in trachea and hindgut (at protein level).</text>
</comment>
<comment type="disruption phenotype">
    <text evidence="6">In the embryo trachea, dorsal trunk airways are tortuous (PubMed:20935638). Failure to secrete verm/vermiform into the growing tracheal tubes, diffused luminal chitin and tube overelongation (PubMed:20935638). Septate junction permeability is impaired, septate junctions proteins Nrx-IV/Nrx and Cora are abnormally spread basolaterally and strong reduction in paracellular septa (PubMed:20935638). Adherens junctions are normal (PubMed:20935638). Levels of ferritins Fer1 and Fer2 are normal (PubMed:20935638).</text>
</comment>
<comment type="similarity">
    <text evidence="4">Belongs to the transferrin family.</text>
</comment>
<proteinExistence type="evidence at protein level"/>
<name>TRFM_DROME</name>
<dbReference type="EMBL" id="AE014296">
    <property type="protein sequence ID" value="AAF49900.1"/>
    <property type="molecule type" value="Genomic_DNA"/>
</dbReference>
<dbReference type="EMBL" id="BT004490">
    <property type="protein sequence ID" value="AAO42654.1"/>
    <property type="molecule type" value="mRNA"/>
</dbReference>
<dbReference type="RefSeq" id="NP_524044.1">
    <property type="nucleotide sequence ID" value="NM_079320.3"/>
</dbReference>
<dbReference type="SMR" id="Q9VTZ5"/>
<dbReference type="FunCoup" id="Q9VTZ5">
    <property type="interactions" value="145"/>
</dbReference>
<dbReference type="IntAct" id="Q9VTZ5">
    <property type="interactions" value="14"/>
</dbReference>
<dbReference type="STRING" id="7227.FBpp0075698"/>
<dbReference type="MEROPS" id="S60.976"/>
<dbReference type="TCDB" id="1.H.2.1.1">
    <property type="family name" value="the invertebrate pmp22-claudin (claudin2) family"/>
</dbReference>
<dbReference type="GlyGen" id="Q9VTZ5">
    <property type="glycosylation" value="5 sites"/>
</dbReference>
<dbReference type="PaxDb" id="7227-FBpp0075698"/>
<dbReference type="DNASU" id="39435"/>
<dbReference type="EnsemblMetazoa" id="FBtr0075966">
    <property type="protein sequence ID" value="FBpp0075698"/>
    <property type="gene ID" value="FBgn0036299"/>
</dbReference>
<dbReference type="GeneID" id="39435"/>
<dbReference type="KEGG" id="dme:Dmel_CG10620"/>
<dbReference type="UCSC" id="CG10620-RA">
    <property type="organism name" value="d. melanogaster"/>
</dbReference>
<dbReference type="AGR" id="FB:FBgn0036299"/>
<dbReference type="CTD" id="39435"/>
<dbReference type="FlyBase" id="FBgn0036299">
    <property type="gene designation" value="Tsf2"/>
</dbReference>
<dbReference type="VEuPathDB" id="VectorBase:FBgn0036299"/>
<dbReference type="eggNOG" id="ENOG502QSZB">
    <property type="taxonomic scope" value="Eukaryota"/>
</dbReference>
<dbReference type="GeneTree" id="ENSGT00940000167862"/>
<dbReference type="HOGENOM" id="CLU_011309_2_0_1"/>
<dbReference type="InParanoid" id="Q9VTZ5"/>
<dbReference type="OMA" id="CPVPAMT"/>
<dbReference type="OrthoDB" id="9981115at2759"/>
<dbReference type="Reactome" id="R-DME-114608">
    <property type="pathway name" value="Platelet degranulation"/>
</dbReference>
<dbReference type="Reactome" id="R-DME-381426">
    <property type="pathway name" value="Regulation of Insulin-like Growth Factor (IGF) transport and uptake by Insulin-like Growth Factor Binding Proteins (IGFBPs)"/>
</dbReference>
<dbReference type="Reactome" id="R-DME-6798695">
    <property type="pathway name" value="Neutrophil degranulation"/>
</dbReference>
<dbReference type="Reactome" id="R-DME-6799990">
    <property type="pathway name" value="Metal sequestration by antimicrobial proteins"/>
</dbReference>
<dbReference type="Reactome" id="R-DME-8957275">
    <property type="pathway name" value="Post-translational protein phosphorylation"/>
</dbReference>
<dbReference type="Reactome" id="R-DME-917937">
    <property type="pathway name" value="Iron uptake and transport"/>
</dbReference>
<dbReference type="BioGRID-ORCS" id="39435">
    <property type="hits" value="0 hits in 3 CRISPR screens"/>
</dbReference>
<dbReference type="GenomeRNAi" id="39435"/>
<dbReference type="PRO" id="PR:Q9VTZ5"/>
<dbReference type="Proteomes" id="UP000000803">
    <property type="component" value="Chromosome 3L"/>
</dbReference>
<dbReference type="Bgee" id="FBgn0036299">
    <property type="expression patterns" value="Expressed in second segment of antenna (Drosophila) and 123 other cell types or tissues"/>
</dbReference>
<dbReference type="GO" id="GO:0016327">
    <property type="term" value="C:apicolateral plasma membrane"/>
    <property type="evidence" value="ECO:0007669"/>
    <property type="project" value="UniProtKB-SubCell"/>
</dbReference>
<dbReference type="GO" id="GO:0005829">
    <property type="term" value="C:cytosol"/>
    <property type="evidence" value="ECO:0007005"/>
    <property type="project" value="FlyBase"/>
</dbReference>
<dbReference type="GO" id="GO:0005769">
    <property type="term" value="C:early endosome"/>
    <property type="evidence" value="ECO:0000353"/>
    <property type="project" value="FlyBase"/>
</dbReference>
<dbReference type="GO" id="GO:0005615">
    <property type="term" value="C:extracellular space"/>
    <property type="evidence" value="ECO:0000318"/>
    <property type="project" value="GO_Central"/>
</dbReference>
<dbReference type="GO" id="GO:0005886">
    <property type="term" value="C:plasma membrane"/>
    <property type="evidence" value="ECO:0000314"/>
    <property type="project" value="FlyBase"/>
</dbReference>
<dbReference type="GO" id="GO:0055037">
    <property type="term" value="C:recycling endosome"/>
    <property type="evidence" value="ECO:0000353"/>
    <property type="project" value="FlyBase"/>
</dbReference>
<dbReference type="GO" id="GO:0005918">
    <property type="term" value="C:septate junction"/>
    <property type="evidence" value="ECO:0000353"/>
    <property type="project" value="FlyBase"/>
</dbReference>
<dbReference type="GO" id="GO:0098552">
    <property type="term" value="C:side of membrane"/>
    <property type="evidence" value="ECO:0007669"/>
    <property type="project" value="UniProtKB-KW"/>
</dbReference>
<dbReference type="GO" id="GO:0005506">
    <property type="term" value="F:iron ion binding"/>
    <property type="evidence" value="ECO:0000314"/>
    <property type="project" value="FlyBase"/>
</dbReference>
<dbReference type="GO" id="GO:0006826">
    <property type="term" value="P:iron ion transport"/>
    <property type="evidence" value="ECO:0000318"/>
    <property type="project" value="GO_Central"/>
</dbReference>
<dbReference type="GO" id="GO:0019991">
    <property type="term" value="P:septate junction assembly"/>
    <property type="evidence" value="ECO:0000315"/>
    <property type="project" value="FlyBase"/>
</dbReference>
<dbReference type="CDD" id="cd13529">
    <property type="entry name" value="PBP2_transferrin"/>
    <property type="match status" value="2"/>
</dbReference>
<dbReference type="FunFam" id="3.40.190.10:FF:000498">
    <property type="entry name" value="GD12707"/>
    <property type="match status" value="1"/>
</dbReference>
<dbReference type="FunFam" id="3.40.190.10:FF:000272">
    <property type="entry name" value="Transferrin"/>
    <property type="match status" value="1"/>
</dbReference>
<dbReference type="Gene3D" id="3.40.190.10">
    <property type="entry name" value="Periplasmic binding protein-like II"/>
    <property type="match status" value="5"/>
</dbReference>
<dbReference type="InterPro" id="IPR016357">
    <property type="entry name" value="Transferrin"/>
</dbReference>
<dbReference type="InterPro" id="IPR001156">
    <property type="entry name" value="Transferrin-like_dom"/>
</dbReference>
<dbReference type="InterPro" id="IPR018195">
    <property type="entry name" value="Transferrin_Fe_BS"/>
</dbReference>
<dbReference type="PANTHER" id="PTHR11485">
    <property type="entry name" value="TRANSFERRIN"/>
    <property type="match status" value="1"/>
</dbReference>
<dbReference type="PANTHER" id="PTHR11485:SF29">
    <property type="entry name" value="TRANSFERRIN 2"/>
    <property type="match status" value="1"/>
</dbReference>
<dbReference type="Pfam" id="PF00405">
    <property type="entry name" value="Transferrin"/>
    <property type="match status" value="2"/>
</dbReference>
<dbReference type="PIRSF" id="PIRSF002549">
    <property type="entry name" value="Transferrin"/>
    <property type="match status" value="1"/>
</dbReference>
<dbReference type="PRINTS" id="PR00422">
    <property type="entry name" value="TRANSFERRIN"/>
</dbReference>
<dbReference type="SMART" id="SM00094">
    <property type="entry name" value="TR_FER"/>
    <property type="match status" value="2"/>
</dbReference>
<dbReference type="SUPFAM" id="SSF53850">
    <property type="entry name" value="Periplasmic binding protein-like II"/>
    <property type="match status" value="2"/>
</dbReference>
<dbReference type="PROSITE" id="PS00205">
    <property type="entry name" value="TRANSFERRIN_LIKE_1"/>
    <property type="match status" value="1"/>
</dbReference>
<dbReference type="PROSITE" id="PS00206">
    <property type="entry name" value="TRANSFERRIN_LIKE_2"/>
    <property type="match status" value="1"/>
</dbReference>
<dbReference type="PROSITE" id="PS51408">
    <property type="entry name" value="TRANSFERRIN_LIKE_4"/>
    <property type="match status" value="2"/>
</dbReference>